<dbReference type="EC" id="3.5.2.6" evidence="6 7 9 10"/>
<dbReference type="EMBL" id="SEWA01000006">
    <property type="protein sequence ID" value="TLI62737.1"/>
    <property type="molecule type" value="Genomic_DNA"/>
</dbReference>
<dbReference type="PDB" id="4HBT">
    <property type="method" value="X-ray"/>
    <property type="resolution" value="1.10 A"/>
    <property type="chains" value="A=29-291"/>
</dbReference>
<dbReference type="PDB" id="4HBU">
    <property type="method" value="X-ray"/>
    <property type="resolution" value="1.10 A"/>
    <property type="chains" value="A=29-291"/>
</dbReference>
<dbReference type="PDB" id="5FA7">
    <property type="method" value="X-ray"/>
    <property type="resolution" value="1.67 A"/>
    <property type="chains" value="A/B=26-291"/>
</dbReference>
<dbReference type="PDB" id="5FAO">
    <property type="method" value="X-ray"/>
    <property type="resolution" value="3.01 A"/>
    <property type="chains" value="A/B=29-291"/>
</dbReference>
<dbReference type="PDB" id="5FAP">
    <property type="method" value="X-ray"/>
    <property type="resolution" value="2.70 A"/>
    <property type="chains" value="A/B=29-291"/>
</dbReference>
<dbReference type="PDB" id="7U48">
    <property type="method" value="X-ray"/>
    <property type="resolution" value="1.67 A"/>
    <property type="chains" value="A/B/C=1-291"/>
</dbReference>
<dbReference type="PDB" id="7U49">
    <property type="method" value="X-ray"/>
    <property type="resolution" value="1.72 A"/>
    <property type="chains" value="A/B/C=1-291"/>
</dbReference>
<dbReference type="PDB" id="7U4B">
    <property type="method" value="X-ray"/>
    <property type="resolution" value="1.92 A"/>
    <property type="chains" value="A/B/C=1-290"/>
</dbReference>
<dbReference type="PDB" id="7U57">
    <property type="method" value="X-ray"/>
    <property type="resolution" value="2.37 A"/>
    <property type="chains" value="A/B/C=1-291"/>
</dbReference>
<dbReference type="PDBsum" id="4HBT"/>
<dbReference type="PDBsum" id="4HBU"/>
<dbReference type="PDBsum" id="5FA7"/>
<dbReference type="PDBsum" id="5FAO"/>
<dbReference type="PDBsum" id="5FAP"/>
<dbReference type="PDBsum" id="7U48"/>
<dbReference type="PDBsum" id="7U49"/>
<dbReference type="PDBsum" id="7U4B"/>
<dbReference type="PDBsum" id="7U57"/>
<dbReference type="SMR" id="A0A5R8T042"/>
<dbReference type="CARD" id="ARO:3001878">
    <property type="molecule name" value="CTX-M-15"/>
    <property type="mechanism identifier" value="ARO:0001004"/>
    <property type="mechanism name" value="antibiotic inactivation"/>
</dbReference>
<dbReference type="Proteomes" id="UP000309847">
    <property type="component" value="Unassembled WGS sequence"/>
</dbReference>
<dbReference type="GO" id="GO:0005576">
    <property type="term" value="C:extracellular region"/>
    <property type="evidence" value="ECO:0007669"/>
    <property type="project" value="UniProtKB-SubCell"/>
</dbReference>
<dbReference type="GO" id="GO:0008800">
    <property type="term" value="F:beta-lactamase activity"/>
    <property type="evidence" value="ECO:0007669"/>
    <property type="project" value="UniProtKB-EC"/>
</dbReference>
<dbReference type="GO" id="GO:0030655">
    <property type="term" value="P:beta-lactam antibiotic catabolic process"/>
    <property type="evidence" value="ECO:0007669"/>
    <property type="project" value="InterPro"/>
</dbReference>
<dbReference type="GO" id="GO:0046677">
    <property type="term" value="P:response to antibiotic"/>
    <property type="evidence" value="ECO:0007669"/>
    <property type="project" value="UniProtKB-KW"/>
</dbReference>
<dbReference type="Gene3D" id="3.40.710.10">
    <property type="entry name" value="DD-peptidase/beta-lactamase superfamily"/>
    <property type="match status" value="1"/>
</dbReference>
<dbReference type="InterPro" id="IPR012338">
    <property type="entry name" value="Beta-lactam/transpept-like"/>
</dbReference>
<dbReference type="InterPro" id="IPR045155">
    <property type="entry name" value="Beta-lactam_cat"/>
</dbReference>
<dbReference type="InterPro" id="IPR000871">
    <property type="entry name" value="Beta-lactam_class-A"/>
</dbReference>
<dbReference type="InterPro" id="IPR023650">
    <property type="entry name" value="Beta-lactam_class-A_AS"/>
</dbReference>
<dbReference type="NCBIfam" id="NF033103">
    <property type="entry name" value="bla_class_A"/>
    <property type="match status" value="1"/>
</dbReference>
<dbReference type="NCBIfam" id="NF033089">
    <property type="entry name" value="blaCTX-M"/>
    <property type="match status" value="1"/>
</dbReference>
<dbReference type="PANTHER" id="PTHR35333">
    <property type="entry name" value="BETA-LACTAMASE"/>
    <property type="match status" value="1"/>
</dbReference>
<dbReference type="PANTHER" id="PTHR35333:SF3">
    <property type="entry name" value="BETA-LACTAMASE-TYPE TRANSPEPTIDASE FOLD CONTAINING PROTEIN"/>
    <property type="match status" value="1"/>
</dbReference>
<dbReference type="Pfam" id="PF13354">
    <property type="entry name" value="Beta-lactamase2"/>
    <property type="match status" value="1"/>
</dbReference>
<dbReference type="PRINTS" id="PR00118">
    <property type="entry name" value="BLACTAMASEA"/>
</dbReference>
<dbReference type="SUPFAM" id="SSF56601">
    <property type="entry name" value="beta-lactamase/transpeptidase-like"/>
    <property type="match status" value="1"/>
</dbReference>
<dbReference type="PROSITE" id="PS00146">
    <property type="entry name" value="BETA_LACTAMASE_A"/>
    <property type="match status" value="1"/>
</dbReference>
<gene>
    <name evidence="11" type="primary">bla</name>
    <name evidence="11" type="synonym">blaCTX-M-15</name>
    <name evidence="17" type="ORF">EWT59_27045</name>
</gene>
<comment type="function">
    <text evidence="3 6 7 8 9 10">Extended-spectrum beta-lactamase (ESBL) which confers resistance to penicillins, as well as first, second, third and fourth-generation cephalosporins (PubMed:11470367, PubMed:28069651, PubMed:29941650, PubMed:34310213, PubMed:35515906, PubMed:35563620). Has cefotaxime- and ceftazidime-hydrolyzing activity (PubMed:28069651, PubMed:29941650, PubMed:35515906). Inactive against the carbapenem antibiotics, imipenem, meropenem and ertapenem (PubMed:11470367, PubMed:29941650).</text>
</comment>
<comment type="catalytic activity">
    <reaction evidence="6 7 9 10">
        <text>a beta-lactam + H2O = a substituted beta-amino acid</text>
        <dbReference type="Rhea" id="RHEA:20401"/>
        <dbReference type="ChEBI" id="CHEBI:15377"/>
        <dbReference type="ChEBI" id="CHEBI:35627"/>
        <dbReference type="ChEBI" id="CHEBI:140347"/>
        <dbReference type="EC" id="3.5.2.6"/>
    </reaction>
</comment>
<comment type="activity regulation">
    <text evidence="5 6 7 10">Inhibited by the beta-lactamase-blocking agents clavulanic acid and avibactam, via a covalent binding to Ser-73.</text>
</comment>
<comment type="biophysicochemical properties">
    <kinetics>
        <KM evidence="7">42 uM for amoxicillin (at pH 6.4 and 20 degrees Celsius)</KM>
        <KM evidence="6">19 uM for amoxicillin (at pH 6.4 and 20 degrees Celsius)</KM>
        <KM evidence="10">197 uM for ampicillin (at pH 7.4)</KM>
        <KM evidence="10">141 uM for desfuroylceftiofur (at pH 7.4)</KM>
        <KM evidence="7">77 uM for cefalotin (at pH 6.4 and 20 degrees Celsius)</KM>
        <KM evidence="7">200 uM for ceftazidime (at pH 6.4 and 20 degrees Celsius)</KM>
        <KM evidence="6">600 uM for ceftazidime (at pH 6.4 and 20 degrees Celsius)</KM>
        <KM evidence="7">24 uM for cefotaxime (at pH 6.4 and 20 degrees Celsius)</KM>
        <KM evidence="9">324 uM for cefotaxime (at pH 7.4)</KM>
        <KM evidence="9">66 uM for nitrocefin (at pH 7.4)</KM>
        <KM evidence="6">47 uM for nitrocefin (at pH 6.4 and 20 degrees Celsius)</KM>
        <KM evidence="10">1047 uM for nitrocefin (at pH 7.4)</KM>
        <KM evidence="6">51 uM for ceftaroline(at pH 6.4 and 20 degrees Celsius)</KM>
        <KM evidence="6">150 uM for aztreonam (at pH 6.4 and 20 degrees Celsius)</KM>
        <KM evidence="10">330 uM for ceftiofur (at pH 7.4)</KM>
        <text evidence="6 7 9 10">kcat is 47 sec(-1) with amoxicillin as substrate (at pH 6.4 and 20 degrees Celsius) (PubMed:29941650). kcat is 40 sec(-1) with amoxicillin as substrate (at pH 6.4 and 20 degrees Celsius) (PubMed:28069651). kcat is 101 sec(-1) with ampicillin as substrate (at pH 7.4) (PubMed:35563620). kcat is 2200 sec(-1) with cefalotin as substrate (at pH 6.4 and 20 degrees Celsius) (PubMed:29941650). kcat is 1.8 sec(-1) with ceftazidime as substrate (at pH 6.4 and 20 degrees Celsius) (PubMed:29941650). kcat is 1.4 sec(-1) with ceftazidime as substrate (at pH 6.4 and 20 degrees Celsius) (PubMed:28069651). kcat is 110 sec(-1) with cefotaxime as substrate (at pH 6.4 and 20 degrees Celsius) (PubMed:29941650). kcat is 12,820 sec(-1) with cefotaxime as substrate (at pH 7.4) (PubMed:35515906). kcat is 6,172 sec(-1) with nitrocefin as substrate (at pH 7.4) (PubMed:35515906). kcat is 338.3 sec(-1) with nitrocefin as substrate (at pH 7.4) (PubMed:35563620). kcat is 90 sec(-1) with ceftaroline as substrate (at pH 6.4 and 20 degrees Celsius) (PubMed:28069651). kcat is 1.2 sec(-1) with ceftaroline as substrate (at pH 6.4 and 20 degrees Celsius) (PubMed:28069651). kcat is 313.7 sec(-1) with ceftiofur as substrate (at pH 7.4) (PubMed:35563620). kcat is 489.8 sec(-1) with desfuroylceftiofur as substrate (at pH 7.4) (PubMed:35563620).</text>
    </kinetics>
</comment>
<comment type="subunit">
    <text evidence="1">Monomer.</text>
</comment>
<comment type="subcellular location">
    <subcellularLocation>
        <location evidence="8">Secreted</location>
    </subcellularLocation>
    <text evidence="8">Type I secretion system (T1SS) probably involved in secretion process.</text>
</comment>
<comment type="induction">
    <text evidence="3">Expression may be regulated by promoter elements associated with upstream probable transposase tnpA.</text>
</comment>
<comment type="miscellaneous">
    <text evidence="4">The class A beta-lactamase family has a specific amino-acid numbering system, sometimes called Ambler or ABL numbering and often misspelt as Amber (PubMed:2039479). A multiple sequence alignment was used to derive a consensus sequence and then the consensus was numbered taking into account insertions and deletions (PubMed:2039479). This allows use of identical numbers, e.g. for active site residues, despite differences in protein length (PubMed:2039479). UniProt always uses natural numbering of residues, hence there appear to be differences in numbering between this entry and some papers (PubMed:2039479).</text>
</comment>
<comment type="similarity">
    <text evidence="15">Belongs to the class-A beta-lactamase family.</text>
</comment>
<keyword id="KW-0002">3D-structure</keyword>
<keyword id="KW-0046">Antibiotic resistance</keyword>
<keyword id="KW-0378">Hydrolase</keyword>
<keyword id="KW-0964">Secreted</keyword>
<keyword id="KW-0732">Signal</keyword>
<proteinExistence type="evidence at protein level"/>
<sequence length="291" mass="31144">MVKKSLRQFTLMATATVTLLLGSVPLYAQTADVQQKLAELERQSGGRLGVALINTADNSQILYRADERFAMCSTSKVMAAAAVLKKSESEPNLLNQRVEIKKSDLVNYNPIAEKHVNGTMSLAELSAAALQYSDNVAMNKLIAHVGGPASVTAFARQLGDETFRLDRTEPTLNTAIPGDPRDTTSPRAMAQTLRNLTLGKALGDSQRAQLVTWMKGNTTGAASIQAGLPASWVVGDKTGSGGYGTTNDIAVIWPKDRAPLILVTYFTQPQPKAESRRDVLASAAKIVTDGL</sequence>
<feature type="signal peptide" evidence="2">
    <location>
        <begin position="1"/>
        <end position="28"/>
    </location>
</feature>
<feature type="chain" id="PRO_0000460260" description="Beta-lactamase CTX-M-15" evidence="2">
    <location>
        <begin position="29"/>
        <end position="291"/>
    </location>
</feature>
<feature type="active site" description="Nucleophile; acyl-ester intermediate" evidence="5 10">
    <location>
        <position position="73"/>
    </location>
</feature>
<feature type="binding site" evidence="10">
    <location>
        <position position="76"/>
    </location>
    <ligand>
        <name>a beta-lactam</name>
        <dbReference type="ChEBI" id="CHEBI:35627"/>
    </ligand>
</feature>
<feature type="binding site" evidence="10">
    <location>
        <position position="133"/>
    </location>
    <ligand>
        <name>a beta-lactam</name>
        <dbReference type="ChEBI" id="CHEBI:35627"/>
    </ligand>
</feature>
<feature type="binding site" evidence="10">
    <location>
        <position position="169"/>
    </location>
    <ligand>
        <name>a beta-lactam</name>
        <dbReference type="ChEBI" id="CHEBI:35627"/>
    </ligand>
</feature>
<feature type="binding site" evidence="10">
    <location>
        <position position="240"/>
    </location>
    <ligand>
        <name>a beta-lactam</name>
        <dbReference type="ChEBI" id="CHEBI:35627"/>
    </ligand>
</feature>
<feature type="mutagenesis site" description="Significantly reduces resistance to cefotaxime in DH5alpha strain. Reduces catalytic efficiency with respect to cefotaxime." evidence="9">
    <original>R</original>
    <variation>L</variation>
    <location>
        <position position="64"/>
    </location>
</feature>
<feature type="mutagenesis site" description="Significantly decreases catalytic efficiency with respect to ampicillin, ceftiofur, nitrocefin and desfuroylceftiofur." evidence="10">
    <original>S</original>
    <variation>A</variation>
    <location>
        <position position="73"/>
    </location>
</feature>
<feature type="mutagenesis site" description="Significantly reduces resistance to ceftazidime in TOP10 strain. Reduces, but does not abolish, catalytic efficiency with respect to ceftazidime; when associated with Q-172. Slightly increases resistance to ceftazidime in TOP10 strain; when associated with Q-172. Reduces avibactam inhibition in combination with ceftazidime; when associated with Q-172." evidence="7">
    <original>S</original>
    <variation>G</variation>
    <location>
        <position position="133"/>
    </location>
</feature>
<feature type="mutagenesis site" description="Significantly decreases the efficacy of inhibition by beta-lactamase-blocking agent, avibactam. Significant decreases in catalytic efficiency with respect to amoxicillin, aztreonam, ceftaroline, ceftazidime and nitrocefin. No change in resistance to beta-lactamase-blocking agent clavulanic acid." evidence="6">
    <original>N</original>
    <variation>G</variation>
    <location>
        <position position="135"/>
    </location>
</feature>
<feature type="mutagenesis site" description="Slightly decreases resistance to ceftazidime in TOP10 strain. Abolishes resistance to cefotaxime and aztreonam in TOP10 strain. No effect on avibactam inhibition." evidence="7">
    <original>R</original>
    <variation>G</variation>
    <location>
        <position position="167"/>
    </location>
</feature>
<feature type="mutagenesis site" description="Slightly decreases resistance to ceftazidime in TOP10 strain. Abolishes resistance to cefotaxime and aztreonam in TOP10 strain. No effect on avibactam inhibition." evidence="7">
    <original>P</original>
    <variation>L</variation>
    <location>
        <position position="170"/>
    </location>
</feature>
<feature type="mutagenesis site" description="Increases resistance to ceftazidime in TOP10 strain. Abolishes resistance to cefotaxime and aztreonam in TOP10 strain. No effect on avibactam inhibition. No significant change in catalytic efficiency with respect to ceftazidime." evidence="7">
    <original>P</original>
    <variation>S</variation>
    <location>
        <position position="170"/>
    </location>
</feature>
<feature type="mutagenesis site" description="Significantly increases resistance to ceftazidime in TOP10 strain. No effect on resistance to cefotaxime and aztreonam in TOP10 strain. No effect on avibactam inhibition. Increases resistance to ceftazidime in TOP10 strain; when associated with D-242. Reduces, but does not abolish, catalytic efficiency with respect to ceftazidime; when associated with G-133. Slightly increases resistance to ceftazidime in TOP10 strain; when associated with G-133. Reduces avibactam inhibition in combination with ceftazidime; when associated with G-133." evidence="7">
    <original>L</original>
    <variation>Q</variation>
    <location>
        <position position="172"/>
    </location>
</feature>
<feature type="mutagenesis site" description="Slightly decreases resistance to ceftazidime in TOP10 strain. Abolishes resistance to cefotaxime and aztreonam in TOP10 strain. No effect on avibactam inhibition." evidence="7">
    <original>P</original>
    <variation>Q</variation>
    <location>
        <position position="177"/>
    </location>
</feature>
<feature type="mutagenesis site" description="Reduces resistance to ceftazidime in TOP10 strain; when associated with Q-172." evidence="7">
    <original>G</original>
    <variation>D</variation>
    <location>
        <position position="242"/>
    </location>
</feature>
<feature type="mutagenesis site" description="Almost abolishes resistance to cefotaxime in DH5alpha strain. Reduces catalytic efficiency with respect to cefotaxime." evidence="9">
    <original>N</original>
    <variation>V</variation>
    <location>
        <position position="247"/>
    </location>
</feature>
<accession>A0A5R8T042</accession>
<name>BLC15_ECO25</name>
<evidence type="ECO:0000250" key="1">
    <source>
        <dbReference type="UniProtKB" id="P9WKD3"/>
    </source>
</evidence>
<evidence type="ECO:0000255" key="2"/>
<evidence type="ECO:0000269" key="3">
    <source>
    </source>
</evidence>
<evidence type="ECO:0000269" key="4">
    <source>
    </source>
</evidence>
<evidence type="ECO:0000269" key="5">
    <source>
    </source>
</evidence>
<evidence type="ECO:0000269" key="6">
    <source>
    </source>
</evidence>
<evidence type="ECO:0000269" key="7">
    <source>
    </source>
</evidence>
<evidence type="ECO:0000269" key="8">
    <source>
    </source>
</evidence>
<evidence type="ECO:0000269" key="9">
    <source>
    </source>
</evidence>
<evidence type="ECO:0000269" key="10">
    <source>
    </source>
</evidence>
<evidence type="ECO:0000303" key="11">
    <source>
    </source>
</evidence>
<evidence type="ECO:0000303" key="12">
    <source>
    </source>
</evidence>
<evidence type="ECO:0000303" key="13">
    <source>
    </source>
</evidence>
<evidence type="ECO:0000303" key="14">
    <source>
    </source>
</evidence>
<evidence type="ECO:0000305" key="15"/>
<evidence type="ECO:0000305" key="16">
    <source>
    </source>
</evidence>
<evidence type="ECO:0000312" key="17">
    <source>
        <dbReference type="EMBL" id="TLI62737.1"/>
    </source>
</evidence>
<evidence type="ECO:0000312" key="18">
    <source>
        <dbReference type="Proteomes" id="UP000309847"/>
    </source>
</evidence>
<evidence type="ECO:0007744" key="19">
    <source>
        <dbReference type="PDB" id="4HBT"/>
    </source>
</evidence>
<evidence type="ECO:0007744" key="20">
    <source>
        <dbReference type="PDB" id="4HBU"/>
    </source>
</evidence>
<evidence type="ECO:0007744" key="21">
    <source>
        <dbReference type="PDB" id="5FA7"/>
    </source>
</evidence>
<evidence type="ECO:0007744" key="22">
    <source>
        <dbReference type="PDB" id="5FAO"/>
    </source>
</evidence>
<evidence type="ECO:0007744" key="23">
    <source>
        <dbReference type="PDB" id="7U48"/>
    </source>
</evidence>
<evidence type="ECO:0007744" key="24">
    <source>
        <dbReference type="PDB" id="7U49"/>
    </source>
</evidence>
<evidence type="ECO:0007744" key="25">
    <source>
        <dbReference type="PDB" id="7U4B"/>
    </source>
</evidence>
<evidence type="ECO:0007744" key="26">
    <source>
        <dbReference type="PDB" id="7U57"/>
    </source>
</evidence>
<protein>
    <recommendedName>
        <fullName evidence="11">Beta-lactamase CTX-M-15</fullName>
        <ecNumber evidence="6 7 9 10">3.5.2.6</ecNumber>
    </recommendedName>
    <alternativeName>
        <fullName evidence="16">Cefotaximase 15</fullName>
    </alternativeName>
</protein>
<organism evidence="18">
    <name type="scientific">Escherichia coli O25b:H4</name>
    <dbReference type="NCBI Taxonomy" id="941280"/>
    <lineage>
        <taxon>Bacteria</taxon>
        <taxon>Pseudomonadati</taxon>
        <taxon>Pseudomonadota</taxon>
        <taxon>Gammaproteobacteria</taxon>
        <taxon>Enterobacterales</taxon>
        <taxon>Enterobacteriaceae</taxon>
        <taxon>Escherichia</taxon>
    </lineage>
</organism>
<reference evidence="15" key="1">
    <citation type="journal article" date="2001" name="FEMS Microbiol. Lett.">
        <title>Plasmid-mediated extended-spectrum beta-lactamase (CTX-M-3 like) from India and gene association with insertion sequence ISEcp1.</title>
        <authorList>
            <person name="Karim A."/>
            <person name="Poirel L."/>
            <person name="Nagarajan S."/>
            <person name="Nordmann P."/>
        </authorList>
    </citation>
    <scope>NUCLEOTIDE SEQUENCE [GENOMIC DNA]</scope>
    <scope>FUNCTION</scope>
</reference>
<reference evidence="18" key="2">
    <citation type="submission" date="2019-01" db="EMBL/GenBank/DDBJ databases">
        <title>Genome and plasmid diversity of ESBL producing Escherichia coli ST131 tracking phylogenetic trajectories with Bayesian inference.</title>
        <authorList>
            <person name="Ny S."/>
        </authorList>
    </citation>
    <scope>NUCLEOTIDE SEQUENCE [LARGE SCALE GENOMIC DNA]</scope>
    <source>
        <strain evidence="18">C0101-PB_2013</strain>
    </source>
</reference>
<reference evidence="15" key="3">
    <citation type="journal article" date="1991" name="Biochem. J.">
        <title>A standard numbering scheme for the class A beta-lactamases.</title>
        <authorList>
            <person name="Ambler R.P."/>
            <person name="Coulson A.F."/>
            <person name="Frere J.M."/>
            <person name="Ghuysen J.M."/>
            <person name="Joris B."/>
            <person name="Forsman M."/>
            <person name="Levesque R.C."/>
            <person name="Tiraby G."/>
            <person name="Waley S.G."/>
        </authorList>
    </citation>
    <scope>NOMENCLATURE</scope>
</reference>
<reference evidence="15" key="4">
    <citation type="journal article" date="2017" name="Antimicrob. Agents Chemother.">
        <title>Inhibition by Avibactam and Clavulanate of the beta-Lactamases KPC-2 and CTX-M-15 Harboring the Substitution N132G in the Conserved SDN Motif.</title>
        <authorList>
            <person name="Ourghanlian C."/>
            <person name="Soroka D."/>
            <person name="Arthur M."/>
        </authorList>
    </citation>
    <scope>FUNCTION</scope>
    <scope>CATALYTIC ACTIVITY</scope>
    <scope>ACTIVITY REGULATION</scope>
    <scope>BIOPHYSICOCHEMICAL PROPERTIES</scope>
    <scope>MUTAGENESIS OF ASN-135</scope>
</reference>
<reference evidence="15" key="5">
    <citation type="journal article" date="2018" name="Antimicrob. Agents Chemother.">
        <title>Combination of Amino Acid Substitutions Leading to CTX-M-15-Mediated Resistance to the Ceftazidime-Avibactam Combination.</title>
        <authorList>
            <person name="Compain F."/>
            <person name="Dorchene D."/>
            <person name="Arthur M."/>
        </authorList>
    </citation>
    <scope>FUNCTION</scope>
    <scope>CATALYTIC ACTIVITY</scope>
    <scope>ACTIVITY REGULATION</scope>
    <scope>BIOPHYSICOCHEMICAL PROPERTIES</scope>
    <scope>MUTAGENESIS OF SER-133; ARG-167; PRO-170; LEU-172; PRO-177 AND GLY-242</scope>
    <source>
        <strain evidence="12">TOP10</strain>
    </source>
</reference>
<reference evidence="15" key="6">
    <citation type="journal article" date="2019" name="RSC Adv.">
        <title>Significant role of Asn-247 and Arg-64 residues in close proximity of the active site in maintaining the catalytic function of CTX-M-15 type beta-lactamase.</title>
        <authorList>
            <person name="Maryam L."/>
            <person name="Khalid S."/>
            <person name="Ali A."/>
            <person name="Khan A.U."/>
        </authorList>
    </citation>
    <scope>FUNCTION</scope>
    <scope>CATALYTIC ACTIVITY</scope>
    <scope>BIOPHYSICOCHEMICAL PROPERTIES</scope>
    <scope>MUTAGENESIS OF ARG-64 AND ASN-247</scope>
    <source>
        <strain evidence="14">DH5alpha</strain>
    </source>
</reference>
<reference evidence="15" key="7">
    <citation type="journal article" date="2021" name="Antimicrob. Agents Chemother.">
        <title>Mechanisms Involved in the Active Secretion of CTX-M-15 beta-Lactamase by Pathogenic Escherichia coli ST131.</title>
        <authorList>
            <person name="Rangama S."/>
            <person name="Lidbury I.D.E.A."/>
            <person name="Holden J.M."/>
            <person name="Borsetto C."/>
            <person name="Murphy A.R.J."/>
            <person name="Hawkey P.M."/>
            <person name="Wellington E.M.H."/>
        </authorList>
    </citation>
    <scope>FUNCTION</scope>
    <scope>SUBCELLULAR LOCATION</scope>
    <source>
        <strain evidence="13">ST131 (strain 48)</strain>
    </source>
</reference>
<reference evidence="19 20" key="8">
    <citation type="journal article" date="2013" name="Antimicrob. Agents Chemother.">
        <title>Structural insight into potent broad-spectrum inhibition with reversible recyclization mechanism: avibactam in complex with CTX-M-15 and Pseudomonas aeruginosa AmpC beta-lactamases.</title>
        <authorList>
            <person name="Lahiri S.D."/>
            <person name="Mangani S."/>
            <person name="Durand-Reville T."/>
            <person name="Benvenuti M."/>
            <person name="De Luca F."/>
            <person name="Sanyal G."/>
            <person name="Docquier J.D."/>
        </authorList>
    </citation>
    <scope>X-RAY CRYSTALLOGRAPHY (1.10 ANGSTROMS) OF 29-291 IN COVALENT COMPLEX WITH CLAVULANATE INHIBITOR</scope>
    <scope>ACTIVE SITE</scope>
</reference>
<reference evidence="21 22" key="9">
    <citation type="journal article" date="2016" name="ACS Chem. Biol.">
        <title>Structural and Kinetic Characterization of Diazabicyclooctanes as Dual Inhibitors of Both Serine-beta-Lactamases and Penicillin-Binding Proteins.</title>
        <authorList>
            <person name="King A.M."/>
            <person name="King D.T."/>
            <person name="French S."/>
            <person name="Brouillette E."/>
            <person name="Asli A."/>
            <person name="Alexander J.A."/>
            <person name="Vuckovic M."/>
            <person name="Maiti S.N."/>
            <person name="Parr T.R."/>
            <person name="Brown E.D."/>
            <person name="Malouin F."/>
            <person name="Strynadka N.C."/>
            <person name="Wright G.D."/>
        </authorList>
    </citation>
    <scope>X-RAY CRYSTALLOGRAPHY (1.67 ANGSTROMS) OF 26-291 IN COVALENT COMPLEXES WITH DIAZABICYCLOOCTANE INHIBITORS</scope>
</reference>
<reference evidence="23 24 25 26" key="10">
    <citation type="journal article" date="2022" name="Int. J. Mol. Sci.">
        <title>Characterization of Interactions between CTX-M-15 and Clavulanic Acid, Desfuroylceftiofur, Ceftiofur, Ampicillin, and Nitrocefin.</title>
        <authorList>
            <person name="Ahmadvand P."/>
            <person name="Avillan J.J."/>
            <person name="Lewis J.A."/>
            <person name="Call D.R."/>
            <person name="Kang C."/>
        </authorList>
    </citation>
    <scope>X-RAY CRYSTALLOGRAPHY (1.67 ANGSTROMS) IN COVALENT COMPLEXES WITH DESFUROYLCEFTIOFUR AND AMPICILLIN AND WITH CLAVULANATE INHIBITOR</scope>
    <scope>FUNCTION</scope>
    <scope>ACTIVE SITE</scope>
    <scope>CATALYTIC ACTIVITY</scope>
    <scope>ACTIVITY REGULATION</scope>
    <scope>BIOPHYSICOCHEMICAL PROPERTIES</scope>
    <scope>MUTAGENESIS OF SER-73</scope>
</reference>